<name>TRPF_THIDA</name>
<proteinExistence type="inferred from homology"/>
<accession>Q3SHL8</accession>
<comment type="catalytic activity">
    <reaction evidence="1">
        <text>N-(5-phospho-beta-D-ribosyl)anthranilate = 1-(2-carboxyphenylamino)-1-deoxy-D-ribulose 5-phosphate</text>
        <dbReference type="Rhea" id="RHEA:21540"/>
        <dbReference type="ChEBI" id="CHEBI:18277"/>
        <dbReference type="ChEBI" id="CHEBI:58613"/>
        <dbReference type="EC" id="5.3.1.24"/>
    </reaction>
</comment>
<comment type="pathway">
    <text evidence="1">Amino-acid biosynthesis; L-tryptophan biosynthesis; L-tryptophan from chorismate: step 3/5.</text>
</comment>
<comment type="similarity">
    <text evidence="1">Belongs to the TrpF family.</text>
</comment>
<protein>
    <recommendedName>
        <fullName evidence="1">N-(5'-phosphoribosyl)anthranilate isomerase</fullName>
        <shortName evidence="1">PRAI</shortName>
        <ecNumber evidence="1">5.3.1.24</ecNumber>
    </recommendedName>
</protein>
<evidence type="ECO:0000255" key="1">
    <source>
        <dbReference type="HAMAP-Rule" id="MF_00135"/>
    </source>
</evidence>
<feature type="chain" id="PRO_1000197135" description="N-(5'-phosphoribosyl)anthranilate isomerase">
    <location>
        <begin position="1"/>
        <end position="205"/>
    </location>
</feature>
<sequence>MAVRVKICGITRVDDLHAACDAGADALGFVFYEKSPRHLTLDAAAALLREVPPFVQTVGLFVDANPAFVDSVLRAVPLDLLQFHGDEKPADCARHGRPWIKAIRVRADTDLLKCAADFAAASGLLLDAYVPGVPGGTGARFDWRLIPPRLPQRVILSGGLTPDNVADAVRRVRPWAVDVSSGVEAAKGIKDAQKIARFISQAKAS</sequence>
<organism>
    <name type="scientific">Thiobacillus denitrificans (strain ATCC 25259 / T1)</name>
    <dbReference type="NCBI Taxonomy" id="292415"/>
    <lineage>
        <taxon>Bacteria</taxon>
        <taxon>Pseudomonadati</taxon>
        <taxon>Pseudomonadota</taxon>
        <taxon>Betaproteobacteria</taxon>
        <taxon>Nitrosomonadales</taxon>
        <taxon>Thiobacillaceae</taxon>
        <taxon>Thiobacillus</taxon>
    </lineage>
</organism>
<reference key="1">
    <citation type="journal article" date="2006" name="J. Bacteriol.">
        <title>The genome sequence of the obligately chemolithoautotrophic, facultatively anaerobic bacterium Thiobacillus denitrificans.</title>
        <authorList>
            <person name="Beller H.R."/>
            <person name="Chain P.S."/>
            <person name="Letain T.E."/>
            <person name="Chakicherla A."/>
            <person name="Larimer F.W."/>
            <person name="Richardson P.M."/>
            <person name="Coleman M.A."/>
            <person name="Wood A.P."/>
            <person name="Kelly D.P."/>
        </authorList>
    </citation>
    <scope>NUCLEOTIDE SEQUENCE [LARGE SCALE GENOMIC DNA]</scope>
    <source>
        <strain>ATCC 25259 / T1</strain>
    </source>
</reference>
<dbReference type="EC" id="5.3.1.24" evidence="1"/>
<dbReference type="EMBL" id="CP000116">
    <property type="protein sequence ID" value="AAZ97868.1"/>
    <property type="molecule type" value="Genomic_DNA"/>
</dbReference>
<dbReference type="RefSeq" id="WP_011312427.1">
    <property type="nucleotide sequence ID" value="NC_007404.1"/>
</dbReference>
<dbReference type="SMR" id="Q3SHL8"/>
<dbReference type="STRING" id="292415.Tbd_1915"/>
<dbReference type="KEGG" id="tbd:Tbd_1915"/>
<dbReference type="eggNOG" id="COG0135">
    <property type="taxonomic scope" value="Bacteria"/>
</dbReference>
<dbReference type="HOGENOM" id="CLU_076364_2_0_4"/>
<dbReference type="OrthoDB" id="9796196at2"/>
<dbReference type="UniPathway" id="UPA00035">
    <property type="reaction ID" value="UER00042"/>
</dbReference>
<dbReference type="Proteomes" id="UP000008291">
    <property type="component" value="Chromosome"/>
</dbReference>
<dbReference type="GO" id="GO:0004640">
    <property type="term" value="F:phosphoribosylanthranilate isomerase activity"/>
    <property type="evidence" value="ECO:0007669"/>
    <property type="project" value="UniProtKB-UniRule"/>
</dbReference>
<dbReference type="GO" id="GO:0000162">
    <property type="term" value="P:L-tryptophan biosynthetic process"/>
    <property type="evidence" value="ECO:0007669"/>
    <property type="project" value="UniProtKB-UniRule"/>
</dbReference>
<dbReference type="CDD" id="cd00405">
    <property type="entry name" value="PRAI"/>
    <property type="match status" value="1"/>
</dbReference>
<dbReference type="FunFam" id="3.20.20.70:FF:000075">
    <property type="entry name" value="Tryptophan biosynthesis protein TRP1"/>
    <property type="match status" value="1"/>
</dbReference>
<dbReference type="Gene3D" id="3.20.20.70">
    <property type="entry name" value="Aldolase class I"/>
    <property type="match status" value="1"/>
</dbReference>
<dbReference type="HAMAP" id="MF_00135">
    <property type="entry name" value="PRAI"/>
    <property type="match status" value="1"/>
</dbReference>
<dbReference type="InterPro" id="IPR013785">
    <property type="entry name" value="Aldolase_TIM"/>
</dbReference>
<dbReference type="InterPro" id="IPR001240">
    <property type="entry name" value="PRAI_dom"/>
</dbReference>
<dbReference type="InterPro" id="IPR011060">
    <property type="entry name" value="RibuloseP-bd_barrel"/>
</dbReference>
<dbReference type="InterPro" id="IPR044643">
    <property type="entry name" value="TrpF_fam"/>
</dbReference>
<dbReference type="NCBIfam" id="NF002298">
    <property type="entry name" value="PRK01222.1-4"/>
    <property type="match status" value="1"/>
</dbReference>
<dbReference type="NCBIfam" id="NF002299">
    <property type="entry name" value="PRK01222.1-6"/>
    <property type="match status" value="1"/>
</dbReference>
<dbReference type="PANTHER" id="PTHR42894">
    <property type="entry name" value="N-(5'-PHOSPHORIBOSYL)ANTHRANILATE ISOMERASE"/>
    <property type="match status" value="1"/>
</dbReference>
<dbReference type="PANTHER" id="PTHR42894:SF1">
    <property type="entry name" value="N-(5'-PHOSPHORIBOSYL)ANTHRANILATE ISOMERASE"/>
    <property type="match status" value="1"/>
</dbReference>
<dbReference type="Pfam" id="PF00697">
    <property type="entry name" value="PRAI"/>
    <property type="match status" value="1"/>
</dbReference>
<dbReference type="SUPFAM" id="SSF51366">
    <property type="entry name" value="Ribulose-phoshate binding barrel"/>
    <property type="match status" value="1"/>
</dbReference>
<keyword id="KW-0028">Amino-acid biosynthesis</keyword>
<keyword id="KW-0057">Aromatic amino acid biosynthesis</keyword>
<keyword id="KW-0413">Isomerase</keyword>
<keyword id="KW-1185">Reference proteome</keyword>
<keyword id="KW-0822">Tryptophan biosynthesis</keyword>
<gene>
    <name evidence="1" type="primary">trpF</name>
    <name type="ordered locus">Tbd_1915</name>
</gene>